<proteinExistence type="inferred from homology"/>
<reference key="1">
    <citation type="journal article" date="2008" name="Appl. Environ. Microbiol.">
        <title>Genome of the epsilonproteobacterial chemolithoautotroph Sulfurimonas denitrificans.</title>
        <authorList>
            <person name="Sievert S.M."/>
            <person name="Scott K.M."/>
            <person name="Klotz M.G."/>
            <person name="Chain P.S.G."/>
            <person name="Hauser L.J."/>
            <person name="Hemp J."/>
            <person name="Huegler M."/>
            <person name="Land M."/>
            <person name="Lapidus A."/>
            <person name="Larimer F.W."/>
            <person name="Lucas S."/>
            <person name="Malfatti S.A."/>
            <person name="Meyer F."/>
            <person name="Paulsen I.T."/>
            <person name="Ren Q."/>
            <person name="Simon J."/>
            <person name="Bailey K."/>
            <person name="Diaz E."/>
            <person name="Fitzpatrick K.A."/>
            <person name="Glover B."/>
            <person name="Gwatney N."/>
            <person name="Korajkic A."/>
            <person name="Long A."/>
            <person name="Mobberley J.M."/>
            <person name="Pantry S.N."/>
            <person name="Pazder G."/>
            <person name="Peterson S."/>
            <person name="Quintanilla J.D."/>
            <person name="Sprinkle R."/>
            <person name="Stephens J."/>
            <person name="Thomas P."/>
            <person name="Vaughn R."/>
            <person name="Weber M.J."/>
            <person name="Wooten L.L."/>
        </authorList>
    </citation>
    <scope>NUCLEOTIDE SEQUENCE [LARGE SCALE GENOMIC DNA]</scope>
    <source>
        <strain>ATCC 33889 / DSM 1251</strain>
    </source>
</reference>
<organism>
    <name type="scientific">Sulfurimonas denitrificans (strain ATCC 33889 / DSM 1251)</name>
    <name type="common">Thiomicrospira denitrificans (strain ATCC 33889 / DSM 1251)</name>
    <dbReference type="NCBI Taxonomy" id="326298"/>
    <lineage>
        <taxon>Bacteria</taxon>
        <taxon>Pseudomonadati</taxon>
        <taxon>Campylobacterota</taxon>
        <taxon>Epsilonproteobacteria</taxon>
        <taxon>Campylobacterales</taxon>
        <taxon>Sulfurimonadaceae</taxon>
        <taxon>Sulfurimonas</taxon>
    </lineage>
</organism>
<protein>
    <recommendedName>
        <fullName evidence="2">D-alanine--D-alanine ligase</fullName>
        <ecNumber evidence="2">6.3.2.4</ecNumber>
    </recommendedName>
    <alternativeName>
        <fullName evidence="2">D-Ala-D-Ala ligase</fullName>
    </alternativeName>
    <alternativeName>
        <fullName evidence="2">D-alanylalanine synthetase</fullName>
    </alternativeName>
</protein>
<name>DDL_SULDN</name>
<keyword id="KW-0067">ATP-binding</keyword>
<keyword id="KW-0133">Cell shape</keyword>
<keyword id="KW-0961">Cell wall biogenesis/degradation</keyword>
<keyword id="KW-0963">Cytoplasm</keyword>
<keyword id="KW-0436">Ligase</keyword>
<keyword id="KW-0460">Magnesium</keyword>
<keyword id="KW-0464">Manganese</keyword>
<keyword id="KW-0479">Metal-binding</keyword>
<keyword id="KW-0547">Nucleotide-binding</keyword>
<keyword id="KW-0573">Peptidoglycan synthesis</keyword>
<keyword id="KW-1185">Reference proteome</keyword>
<sequence>MKLTILFGGASFEHEISIVSAITLKEKLSNFELNFIFCDQDHTFYLINASKMRATTFSRGEYKKMPKLTLSHGSFVQKSLFGSVDISGTVLNLIHGGDGEDGTIAAILDFFSIKYIGPRVDASVFSYDKRYTKWLCHARGVKCVESQELSSSEHSNIKIAYPIIVKPSRLGSSIGVSIVKDESKLDYALDSAFEFDNTVIVEPFLEGVKEYNLAGFSAGKKFYFSIIEEPQKEEFLDFEKKYMDFSRSGNVDSAEISKELESKLRASFEKVYKNLFEGALIRCDFFVVNGEVFLNEINPIPGSMANYLFDDFGGSLKLLANSLPHTKRAKVTYEYIHSISKAKGK</sequence>
<dbReference type="EC" id="6.3.2.4" evidence="2"/>
<dbReference type="EMBL" id="CP000153">
    <property type="protein sequence ID" value="ABB44486.1"/>
    <property type="molecule type" value="Genomic_DNA"/>
</dbReference>
<dbReference type="RefSeq" id="WP_011372838.1">
    <property type="nucleotide sequence ID" value="NC_007575.1"/>
</dbReference>
<dbReference type="SMR" id="Q30R95"/>
<dbReference type="STRING" id="326298.Suden_1208"/>
<dbReference type="KEGG" id="tdn:Suden_1208"/>
<dbReference type="eggNOG" id="COG1181">
    <property type="taxonomic scope" value="Bacteria"/>
</dbReference>
<dbReference type="HOGENOM" id="CLU_039268_0_2_7"/>
<dbReference type="OrthoDB" id="9813261at2"/>
<dbReference type="UniPathway" id="UPA00219"/>
<dbReference type="Proteomes" id="UP000002714">
    <property type="component" value="Chromosome"/>
</dbReference>
<dbReference type="GO" id="GO:0005737">
    <property type="term" value="C:cytoplasm"/>
    <property type="evidence" value="ECO:0007669"/>
    <property type="project" value="UniProtKB-SubCell"/>
</dbReference>
<dbReference type="GO" id="GO:0005524">
    <property type="term" value="F:ATP binding"/>
    <property type="evidence" value="ECO:0007669"/>
    <property type="project" value="UniProtKB-KW"/>
</dbReference>
<dbReference type="GO" id="GO:0008716">
    <property type="term" value="F:D-alanine-D-alanine ligase activity"/>
    <property type="evidence" value="ECO:0007669"/>
    <property type="project" value="UniProtKB-UniRule"/>
</dbReference>
<dbReference type="GO" id="GO:0046872">
    <property type="term" value="F:metal ion binding"/>
    <property type="evidence" value="ECO:0007669"/>
    <property type="project" value="UniProtKB-KW"/>
</dbReference>
<dbReference type="GO" id="GO:0071555">
    <property type="term" value="P:cell wall organization"/>
    <property type="evidence" value="ECO:0007669"/>
    <property type="project" value="UniProtKB-KW"/>
</dbReference>
<dbReference type="GO" id="GO:0009252">
    <property type="term" value="P:peptidoglycan biosynthetic process"/>
    <property type="evidence" value="ECO:0007669"/>
    <property type="project" value="UniProtKB-UniRule"/>
</dbReference>
<dbReference type="GO" id="GO:0008360">
    <property type="term" value="P:regulation of cell shape"/>
    <property type="evidence" value="ECO:0007669"/>
    <property type="project" value="UniProtKB-KW"/>
</dbReference>
<dbReference type="Gene3D" id="3.40.50.20">
    <property type="match status" value="1"/>
</dbReference>
<dbReference type="Gene3D" id="3.30.1490.20">
    <property type="entry name" value="ATP-grasp fold, A domain"/>
    <property type="match status" value="1"/>
</dbReference>
<dbReference type="Gene3D" id="3.30.470.20">
    <property type="entry name" value="ATP-grasp fold, B domain"/>
    <property type="match status" value="1"/>
</dbReference>
<dbReference type="HAMAP" id="MF_00047">
    <property type="entry name" value="Dala_Dala_lig"/>
    <property type="match status" value="1"/>
</dbReference>
<dbReference type="InterPro" id="IPR011761">
    <property type="entry name" value="ATP-grasp"/>
</dbReference>
<dbReference type="InterPro" id="IPR013815">
    <property type="entry name" value="ATP_grasp_subdomain_1"/>
</dbReference>
<dbReference type="InterPro" id="IPR000291">
    <property type="entry name" value="D-Ala_lig_Van_CS"/>
</dbReference>
<dbReference type="InterPro" id="IPR005905">
    <property type="entry name" value="D_ala_D_ala"/>
</dbReference>
<dbReference type="InterPro" id="IPR011095">
    <property type="entry name" value="Dala_Dala_lig_C"/>
</dbReference>
<dbReference type="InterPro" id="IPR011127">
    <property type="entry name" value="Dala_Dala_lig_N"/>
</dbReference>
<dbReference type="InterPro" id="IPR016185">
    <property type="entry name" value="PreATP-grasp_dom_sf"/>
</dbReference>
<dbReference type="NCBIfam" id="TIGR01205">
    <property type="entry name" value="D_ala_D_alaTIGR"/>
    <property type="match status" value="1"/>
</dbReference>
<dbReference type="NCBIfam" id="NF002527">
    <property type="entry name" value="PRK01966.1-3"/>
    <property type="match status" value="1"/>
</dbReference>
<dbReference type="PANTHER" id="PTHR23132">
    <property type="entry name" value="D-ALANINE--D-ALANINE LIGASE"/>
    <property type="match status" value="1"/>
</dbReference>
<dbReference type="PANTHER" id="PTHR23132:SF23">
    <property type="entry name" value="D-ALANINE--D-ALANINE LIGASE B"/>
    <property type="match status" value="1"/>
</dbReference>
<dbReference type="Pfam" id="PF07478">
    <property type="entry name" value="Dala_Dala_lig_C"/>
    <property type="match status" value="1"/>
</dbReference>
<dbReference type="Pfam" id="PF01820">
    <property type="entry name" value="Dala_Dala_lig_N"/>
    <property type="match status" value="1"/>
</dbReference>
<dbReference type="SUPFAM" id="SSF56059">
    <property type="entry name" value="Glutathione synthetase ATP-binding domain-like"/>
    <property type="match status" value="1"/>
</dbReference>
<dbReference type="SUPFAM" id="SSF52440">
    <property type="entry name" value="PreATP-grasp domain"/>
    <property type="match status" value="1"/>
</dbReference>
<dbReference type="PROSITE" id="PS50975">
    <property type="entry name" value="ATP_GRASP"/>
    <property type="match status" value="1"/>
</dbReference>
<dbReference type="PROSITE" id="PS00843">
    <property type="entry name" value="DALA_DALA_LIGASE_1"/>
    <property type="match status" value="1"/>
</dbReference>
<dbReference type="PROSITE" id="PS00844">
    <property type="entry name" value="DALA_DALA_LIGASE_2"/>
    <property type="match status" value="1"/>
</dbReference>
<comment type="function">
    <text evidence="2">Cell wall formation.</text>
</comment>
<comment type="catalytic activity">
    <reaction evidence="2">
        <text>2 D-alanine + ATP = D-alanyl-D-alanine + ADP + phosphate + H(+)</text>
        <dbReference type="Rhea" id="RHEA:11224"/>
        <dbReference type="ChEBI" id="CHEBI:15378"/>
        <dbReference type="ChEBI" id="CHEBI:30616"/>
        <dbReference type="ChEBI" id="CHEBI:43474"/>
        <dbReference type="ChEBI" id="CHEBI:57416"/>
        <dbReference type="ChEBI" id="CHEBI:57822"/>
        <dbReference type="ChEBI" id="CHEBI:456216"/>
        <dbReference type="EC" id="6.3.2.4"/>
    </reaction>
</comment>
<comment type="cofactor">
    <cofactor evidence="1">
        <name>Mg(2+)</name>
        <dbReference type="ChEBI" id="CHEBI:18420"/>
    </cofactor>
    <cofactor evidence="1">
        <name>Mn(2+)</name>
        <dbReference type="ChEBI" id="CHEBI:29035"/>
    </cofactor>
    <text evidence="1">Binds 2 magnesium or manganese ions per subunit.</text>
</comment>
<comment type="pathway">
    <text evidence="2">Cell wall biogenesis; peptidoglycan biosynthesis.</text>
</comment>
<comment type="subcellular location">
    <subcellularLocation>
        <location evidence="2">Cytoplasm</location>
    </subcellularLocation>
</comment>
<comment type="similarity">
    <text evidence="2">Belongs to the D-alanine--D-alanine ligase family.</text>
</comment>
<accession>Q30R95</accession>
<feature type="chain" id="PRO_0000341179" description="D-alanine--D-alanine ligase">
    <location>
        <begin position="1"/>
        <end position="345"/>
    </location>
</feature>
<feature type="domain" description="ATP-grasp" evidence="2">
    <location>
        <begin position="133"/>
        <end position="332"/>
    </location>
</feature>
<feature type="binding site" evidence="2">
    <location>
        <begin position="160"/>
        <end position="211"/>
    </location>
    <ligand>
        <name>ATP</name>
        <dbReference type="ChEBI" id="CHEBI:30616"/>
    </ligand>
</feature>
<feature type="binding site" evidence="2">
    <location>
        <position position="284"/>
    </location>
    <ligand>
        <name>Mg(2+)</name>
        <dbReference type="ChEBI" id="CHEBI:18420"/>
        <label>1</label>
    </ligand>
</feature>
<feature type="binding site" evidence="2">
    <location>
        <position position="296"/>
    </location>
    <ligand>
        <name>Mg(2+)</name>
        <dbReference type="ChEBI" id="CHEBI:18420"/>
        <label>1</label>
    </ligand>
</feature>
<feature type="binding site" evidence="2">
    <location>
        <position position="296"/>
    </location>
    <ligand>
        <name>Mg(2+)</name>
        <dbReference type="ChEBI" id="CHEBI:18420"/>
        <label>2</label>
    </ligand>
</feature>
<feature type="binding site" evidence="2">
    <location>
        <position position="298"/>
    </location>
    <ligand>
        <name>Mg(2+)</name>
        <dbReference type="ChEBI" id="CHEBI:18420"/>
        <label>2</label>
    </ligand>
</feature>
<gene>
    <name evidence="2" type="primary">ddl</name>
    <name type="ordered locus">Suden_1208</name>
</gene>
<evidence type="ECO:0000250" key="1"/>
<evidence type="ECO:0000255" key="2">
    <source>
        <dbReference type="HAMAP-Rule" id="MF_00047"/>
    </source>
</evidence>